<proteinExistence type="inferred from homology"/>
<evidence type="ECO:0000255" key="1">
    <source>
        <dbReference type="HAMAP-Rule" id="MF_00719"/>
    </source>
</evidence>
<comment type="function">
    <text evidence="1">Joins adenosylcobinamide-GDP and alpha-ribazole to generate adenosylcobalamin (Ado-cobalamin). Also synthesizes adenosylcobalamin 5'-phosphate from adenosylcobinamide-GDP and alpha-ribazole 5'-phosphate.</text>
</comment>
<comment type="catalytic activity">
    <reaction evidence="1">
        <text>alpha-ribazole + adenosylcob(III)inamide-GDP = adenosylcob(III)alamin + GMP + H(+)</text>
        <dbReference type="Rhea" id="RHEA:16049"/>
        <dbReference type="ChEBI" id="CHEBI:10329"/>
        <dbReference type="ChEBI" id="CHEBI:15378"/>
        <dbReference type="ChEBI" id="CHEBI:18408"/>
        <dbReference type="ChEBI" id="CHEBI:58115"/>
        <dbReference type="ChEBI" id="CHEBI:60487"/>
        <dbReference type="EC" id="2.7.8.26"/>
    </reaction>
</comment>
<comment type="catalytic activity">
    <reaction evidence="1">
        <text>alpha-ribazole 5'-phosphate + adenosylcob(III)inamide-GDP = adenosylcob(III)alamin 5'-phosphate + GMP + H(+)</text>
        <dbReference type="Rhea" id="RHEA:23560"/>
        <dbReference type="ChEBI" id="CHEBI:15378"/>
        <dbReference type="ChEBI" id="CHEBI:57918"/>
        <dbReference type="ChEBI" id="CHEBI:58115"/>
        <dbReference type="ChEBI" id="CHEBI:60487"/>
        <dbReference type="ChEBI" id="CHEBI:60493"/>
        <dbReference type="EC" id="2.7.8.26"/>
    </reaction>
</comment>
<comment type="cofactor">
    <cofactor evidence="1">
        <name>Mg(2+)</name>
        <dbReference type="ChEBI" id="CHEBI:18420"/>
    </cofactor>
</comment>
<comment type="pathway">
    <text evidence="1">Cofactor biosynthesis; adenosylcobalamin biosynthesis; adenosylcobalamin from cob(II)yrinate a,c-diamide: step 7/7.</text>
</comment>
<comment type="subcellular location">
    <subcellularLocation>
        <location evidence="1">Cell inner membrane</location>
        <topology evidence="1">Multi-pass membrane protein</topology>
    </subcellularLocation>
</comment>
<comment type="similarity">
    <text evidence="1">Belongs to the CobS family.</text>
</comment>
<keyword id="KW-0997">Cell inner membrane</keyword>
<keyword id="KW-1003">Cell membrane</keyword>
<keyword id="KW-0169">Cobalamin biosynthesis</keyword>
<keyword id="KW-0460">Magnesium</keyword>
<keyword id="KW-0472">Membrane</keyword>
<keyword id="KW-1185">Reference proteome</keyword>
<keyword id="KW-0808">Transferase</keyword>
<keyword id="KW-0812">Transmembrane</keyword>
<keyword id="KW-1133">Transmembrane helix</keyword>
<accession>Q086T5</accession>
<gene>
    <name evidence="1" type="primary">cobS</name>
    <name type="ordered locus">Sfri_0877</name>
</gene>
<protein>
    <recommendedName>
        <fullName evidence="1">Adenosylcobinamide-GDP ribazoletransferase</fullName>
        <ecNumber evidence="1">2.7.8.26</ecNumber>
    </recommendedName>
    <alternativeName>
        <fullName evidence="1">Cobalamin synthase</fullName>
    </alternativeName>
    <alternativeName>
        <fullName evidence="1">Cobalamin-5'-phosphate synthase</fullName>
    </alternativeName>
</protein>
<dbReference type="EC" id="2.7.8.26" evidence="1"/>
<dbReference type="EMBL" id="CP000447">
    <property type="protein sequence ID" value="ABI70730.1"/>
    <property type="molecule type" value="Genomic_DNA"/>
</dbReference>
<dbReference type="RefSeq" id="WP_011636351.1">
    <property type="nucleotide sequence ID" value="NC_008345.1"/>
</dbReference>
<dbReference type="STRING" id="318167.Sfri_0877"/>
<dbReference type="KEGG" id="sfr:Sfri_0877"/>
<dbReference type="eggNOG" id="COG0368">
    <property type="taxonomic scope" value="Bacteria"/>
</dbReference>
<dbReference type="HOGENOM" id="CLU_057426_1_1_6"/>
<dbReference type="OrthoDB" id="9794626at2"/>
<dbReference type="UniPathway" id="UPA00148">
    <property type="reaction ID" value="UER00238"/>
</dbReference>
<dbReference type="Proteomes" id="UP000000684">
    <property type="component" value="Chromosome"/>
</dbReference>
<dbReference type="GO" id="GO:0005886">
    <property type="term" value="C:plasma membrane"/>
    <property type="evidence" value="ECO:0007669"/>
    <property type="project" value="UniProtKB-SubCell"/>
</dbReference>
<dbReference type="GO" id="GO:0051073">
    <property type="term" value="F:adenosylcobinamide-GDP ribazoletransferase activity"/>
    <property type="evidence" value="ECO:0007669"/>
    <property type="project" value="UniProtKB-UniRule"/>
</dbReference>
<dbReference type="GO" id="GO:0008818">
    <property type="term" value="F:cobalamin 5'-phosphate synthase activity"/>
    <property type="evidence" value="ECO:0007669"/>
    <property type="project" value="UniProtKB-UniRule"/>
</dbReference>
<dbReference type="GO" id="GO:0009236">
    <property type="term" value="P:cobalamin biosynthetic process"/>
    <property type="evidence" value="ECO:0007669"/>
    <property type="project" value="UniProtKB-UniRule"/>
</dbReference>
<dbReference type="HAMAP" id="MF_00719">
    <property type="entry name" value="CobS"/>
    <property type="match status" value="1"/>
</dbReference>
<dbReference type="InterPro" id="IPR003805">
    <property type="entry name" value="CobS"/>
</dbReference>
<dbReference type="NCBIfam" id="TIGR00317">
    <property type="entry name" value="cobS"/>
    <property type="match status" value="1"/>
</dbReference>
<dbReference type="NCBIfam" id="NF001277">
    <property type="entry name" value="PRK00235.1-3"/>
    <property type="match status" value="1"/>
</dbReference>
<dbReference type="PANTHER" id="PTHR34148">
    <property type="entry name" value="ADENOSYLCOBINAMIDE-GDP RIBAZOLETRANSFERASE"/>
    <property type="match status" value="1"/>
</dbReference>
<dbReference type="PANTHER" id="PTHR34148:SF1">
    <property type="entry name" value="ADENOSYLCOBINAMIDE-GDP RIBAZOLETRANSFERASE"/>
    <property type="match status" value="1"/>
</dbReference>
<dbReference type="Pfam" id="PF02654">
    <property type="entry name" value="CobS"/>
    <property type="match status" value="1"/>
</dbReference>
<sequence>MSGEIKWLRQLNLFFVAMSFFTRIPVPSWVVIDSDKLNKASRYFGLVGLLIGLICALVFWLAQLILPASIAILLAMVAGVLVTGAFHEDGLADTADGFGGGWTVEDKLRIMKDSRLGSYGALSLGLVLLLKWQLLVELALYSPMAAVSALVAGHTLSRVVASSLIFSEQYVRDDDTSKSKPIAQDQQLNDLFILIASGIFVLLWLNGVAAFVLFITLWLVRILLGGFFRKQIGGYTGDTLGAAQQISEVCCYLVILAVGLS</sequence>
<feature type="chain" id="PRO_1000045805" description="Adenosylcobinamide-GDP ribazoletransferase">
    <location>
        <begin position="1"/>
        <end position="261"/>
    </location>
</feature>
<feature type="transmembrane region" description="Helical" evidence="1">
    <location>
        <begin position="12"/>
        <end position="32"/>
    </location>
</feature>
<feature type="transmembrane region" description="Helical" evidence="1">
    <location>
        <begin position="46"/>
        <end position="66"/>
    </location>
</feature>
<feature type="transmembrane region" description="Helical" evidence="1">
    <location>
        <begin position="67"/>
        <end position="87"/>
    </location>
</feature>
<feature type="transmembrane region" description="Helical" evidence="1">
    <location>
        <begin position="120"/>
        <end position="140"/>
    </location>
</feature>
<feature type="transmembrane region" description="Helical" evidence="1">
    <location>
        <begin position="199"/>
        <end position="219"/>
    </location>
</feature>
<name>COBS_SHEFN</name>
<reference key="1">
    <citation type="submission" date="2006-08" db="EMBL/GenBank/DDBJ databases">
        <title>Complete sequence of Shewanella frigidimarina NCIMB 400.</title>
        <authorList>
            <consortium name="US DOE Joint Genome Institute"/>
            <person name="Copeland A."/>
            <person name="Lucas S."/>
            <person name="Lapidus A."/>
            <person name="Barry K."/>
            <person name="Detter J.C."/>
            <person name="Glavina del Rio T."/>
            <person name="Hammon N."/>
            <person name="Israni S."/>
            <person name="Dalin E."/>
            <person name="Tice H."/>
            <person name="Pitluck S."/>
            <person name="Fredrickson J.K."/>
            <person name="Kolker E."/>
            <person name="McCuel L.A."/>
            <person name="DiChristina T."/>
            <person name="Nealson K.H."/>
            <person name="Newman D."/>
            <person name="Tiedje J.M."/>
            <person name="Zhou J."/>
            <person name="Romine M.F."/>
            <person name="Culley D.E."/>
            <person name="Serres M."/>
            <person name="Chertkov O."/>
            <person name="Brettin T."/>
            <person name="Bruce D."/>
            <person name="Han C."/>
            <person name="Tapia R."/>
            <person name="Gilna P."/>
            <person name="Schmutz J."/>
            <person name="Larimer F."/>
            <person name="Land M."/>
            <person name="Hauser L."/>
            <person name="Kyrpides N."/>
            <person name="Mikhailova N."/>
            <person name="Richardson P."/>
        </authorList>
    </citation>
    <scope>NUCLEOTIDE SEQUENCE [LARGE SCALE GENOMIC DNA]</scope>
    <source>
        <strain>NCIMB 400</strain>
    </source>
</reference>
<organism>
    <name type="scientific">Shewanella frigidimarina (strain NCIMB 400)</name>
    <dbReference type="NCBI Taxonomy" id="318167"/>
    <lineage>
        <taxon>Bacteria</taxon>
        <taxon>Pseudomonadati</taxon>
        <taxon>Pseudomonadota</taxon>
        <taxon>Gammaproteobacteria</taxon>
        <taxon>Alteromonadales</taxon>
        <taxon>Shewanellaceae</taxon>
        <taxon>Shewanella</taxon>
    </lineage>
</organism>